<sequence>MKKLEALLENSFNIRFDDKRLLETAFTHTSYANEHRLLNISHNERLEFLGDAVLQLIISEYLFAKYPKQTEGDMSKLRSTIVREESLAGFSRYCSFDAYIKLGKGEEKSGGRHRDTILGDLFEAFLGALLLDKGIEEVRRFLNQVMIPQVEQGTFEKVKDYKTCLQELLQAKGDVVIDYQVISETGPAHAKQFEVAVLVDEDRLSKGTGRSKKLAEQDAAKNALAQLSEV</sequence>
<organism>
    <name type="scientific">Streptococcus equi subsp. zooepidemicus (strain H70)</name>
    <dbReference type="NCBI Taxonomy" id="553483"/>
    <lineage>
        <taxon>Bacteria</taxon>
        <taxon>Bacillati</taxon>
        <taxon>Bacillota</taxon>
        <taxon>Bacilli</taxon>
        <taxon>Lactobacillales</taxon>
        <taxon>Streptococcaceae</taxon>
        <taxon>Streptococcus</taxon>
    </lineage>
</organism>
<evidence type="ECO:0000255" key="1">
    <source>
        <dbReference type="HAMAP-Rule" id="MF_00104"/>
    </source>
</evidence>
<dbReference type="EC" id="3.1.26.3" evidence="1"/>
<dbReference type="EMBL" id="FM204884">
    <property type="protein sequence ID" value="CAW98596.1"/>
    <property type="molecule type" value="Genomic_DNA"/>
</dbReference>
<dbReference type="SMR" id="C0MCR4"/>
<dbReference type="KEGG" id="seq:SZO_05800"/>
<dbReference type="eggNOG" id="COG0571">
    <property type="taxonomic scope" value="Bacteria"/>
</dbReference>
<dbReference type="HOGENOM" id="CLU_000907_1_3_9"/>
<dbReference type="Proteomes" id="UP000001368">
    <property type="component" value="Chromosome"/>
</dbReference>
<dbReference type="GO" id="GO:0005737">
    <property type="term" value="C:cytoplasm"/>
    <property type="evidence" value="ECO:0007669"/>
    <property type="project" value="UniProtKB-SubCell"/>
</dbReference>
<dbReference type="GO" id="GO:0003725">
    <property type="term" value="F:double-stranded RNA binding"/>
    <property type="evidence" value="ECO:0007669"/>
    <property type="project" value="TreeGrafter"/>
</dbReference>
<dbReference type="GO" id="GO:0046872">
    <property type="term" value="F:metal ion binding"/>
    <property type="evidence" value="ECO:0007669"/>
    <property type="project" value="UniProtKB-KW"/>
</dbReference>
<dbReference type="GO" id="GO:0004525">
    <property type="term" value="F:ribonuclease III activity"/>
    <property type="evidence" value="ECO:0007669"/>
    <property type="project" value="UniProtKB-UniRule"/>
</dbReference>
<dbReference type="GO" id="GO:0019843">
    <property type="term" value="F:rRNA binding"/>
    <property type="evidence" value="ECO:0007669"/>
    <property type="project" value="UniProtKB-KW"/>
</dbReference>
<dbReference type="GO" id="GO:0006397">
    <property type="term" value="P:mRNA processing"/>
    <property type="evidence" value="ECO:0007669"/>
    <property type="project" value="UniProtKB-UniRule"/>
</dbReference>
<dbReference type="GO" id="GO:0010468">
    <property type="term" value="P:regulation of gene expression"/>
    <property type="evidence" value="ECO:0007669"/>
    <property type="project" value="TreeGrafter"/>
</dbReference>
<dbReference type="GO" id="GO:0006364">
    <property type="term" value="P:rRNA processing"/>
    <property type="evidence" value="ECO:0007669"/>
    <property type="project" value="UniProtKB-UniRule"/>
</dbReference>
<dbReference type="GO" id="GO:0008033">
    <property type="term" value="P:tRNA processing"/>
    <property type="evidence" value="ECO:0007669"/>
    <property type="project" value="UniProtKB-KW"/>
</dbReference>
<dbReference type="CDD" id="cd10845">
    <property type="entry name" value="DSRM_RNAse_III_family"/>
    <property type="match status" value="1"/>
</dbReference>
<dbReference type="CDD" id="cd00593">
    <property type="entry name" value="RIBOc"/>
    <property type="match status" value="1"/>
</dbReference>
<dbReference type="FunFam" id="1.10.1520.10:FF:000001">
    <property type="entry name" value="Ribonuclease 3"/>
    <property type="match status" value="1"/>
</dbReference>
<dbReference type="FunFam" id="3.30.160.20:FF:000003">
    <property type="entry name" value="Ribonuclease 3"/>
    <property type="match status" value="1"/>
</dbReference>
<dbReference type="Gene3D" id="3.30.160.20">
    <property type="match status" value="1"/>
</dbReference>
<dbReference type="Gene3D" id="1.10.1520.10">
    <property type="entry name" value="Ribonuclease III domain"/>
    <property type="match status" value="1"/>
</dbReference>
<dbReference type="HAMAP" id="MF_00104">
    <property type="entry name" value="RNase_III"/>
    <property type="match status" value="1"/>
</dbReference>
<dbReference type="InterPro" id="IPR014720">
    <property type="entry name" value="dsRBD_dom"/>
</dbReference>
<dbReference type="InterPro" id="IPR011907">
    <property type="entry name" value="RNase_III"/>
</dbReference>
<dbReference type="InterPro" id="IPR000999">
    <property type="entry name" value="RNase_III_dom"/>
</dbReference>
<dbReference type="InterPro" id="IPR036389">
    <property type="entry name" value="RNase_III_sf"/>
</dbReference>
<dbReference type="NCBIfam" id="TIGR02191">
    <property type="entry name" value="RNaseIII"/>
    <property type="match status" value="1"/>
</dbReference>
<dbReference type="PANTHER" id="PTHR11207:SF0">
    <property type="entry name" value="RIBONUCLEASE 3"/>
    <property type="match status" value="1"/>
</dbReference>
<dbReference type="PANTHER" id="PTHR11207">
    <property type="entry name" value="RIBONUCLEASE III"/>
    <property type="match status" value="1"/>
</dbReference>
<dbReference type="Pfam" id="PF00035">
    <property type="entry name" value="dsrm"/>
    <property type="match status" value="1"/>
</dbReference>
<dbReference type="Pfam" id="PF14622">
    <property type="entry name" value="Ribonucleas_3_3"/>
    <property type="match status" value="1"/>
</dbReference>
<dbReference type="SMART" id="SM00358">
    <property type="entry name" value="DSRM"/>
    <property type="match status" value="1"/>
</dbReference>
<dbReference type="SMART" id="SM00535">
    <property type="entry name" value="RIBOc"/>
    <property type="match status" value="1"/>
</dbReference>
<dbReference type="SUPFAM" id="SSF54768">
    <property type="entry name" value="dsRNA-binding domain-like"/>
    <property type="match status" value="1"/>
</dbReference>
<dbReference type="SUPFAM" id="SSF69065">
    <property type="entry name" value="RNase III domain-like"/>
    <property type="match status" value="1"/>
</dbReference>
<dbReference type="PROSITE" id="PS50137">
    <property type="entry name" value="DS_RBD"/>
    <property type="match status" value="1"/>
</dbReference>
<dbReference type="PROSITE" id="PS00517">
    <property type="entry name" value="RNASE_3_1"/>
    <property type="match status" value="1"/>
</dbReference>
<dbReference type="PROSITE" id="PS50142">
    <property type="entry name" value="RNASE_3_2"/>
    <property type="match status" value="1"/>
</dbReference>
<keyword id="KW-0963">Cytoplasm</keyword>
<keyword id="KW-0255">Endonuclease</keyword>
<keyword id="KW-0378">Hydrolase</keyword>
<keyword id="KW-0460">Magnesium</keyword>
<keyword id="KW-0479">Metal-binding</keyword>
<keyword id="KW-0507">mRNA processing</keyword>
<keyword id="KW-0540">Nuclease</keyword>
<keyword id="KW-0694">RNA-binding</keyword>
<keyword id="KW-0698">rRNA processing</keyword>
<keyword id="KW-0699">rRNA-binding</keyword>
<keyword id="KW-0819">tRNA processing</keyword>
<gene>
    <name evidence="1" type="primary">rnc</name>
    <name type="ordered locus">SZO_05800</name>
</gene>
<proteinExistence type="inferred from homology"/>
<accession>C0MCR4</accession>
<name>RNC_STRS7</name>
<reference key="1">
    <citation type="journal article" date="2009" name="PLoS Pathog.">
        <title>Genomic evidence for the evolution of Streptococcus equi: host restriction, increased virulence, and genetic exchange with human pathogens.</title>
        <authorList>
            <person name="Holden M.T.G."/>
            <person name="Heather Z."/>
            <person name="Paillot R."/>
            <person name="Steward K.F."/>
            <person name="Webb K."/>
            <person name="Ainslie F."/>
            <person name="Jourdan T."/>
            <person name="Bason N.C."/>
            <person name="Holroyd N.E."/>
            <person name="Mungall K."/>
            <person name="Quail M.A."/>
            <person name="Sanders M."/>
            <person name="Simmonds M."/>
            <person name="Willey D."/>
            <person name="Brooks K."/>
            <person name="Aanensen D.M."/>
            <person name="Spratt B.G."/>
            <person name="Jolley K.A."/>
            <person name="Maiden M.C.J."/>
            <person name="Kehoe M."/>
            <person name="Chanter N."/>
            <person name="Bentley S.D."/>
            <person name="Robinson C."/>
            <person name="Maskell D.J."/>
            <person name="Parkhill J."/>
            <person name="Waller A.S."/>
        </authorList>
    </citation>
    <scope>NUCLEOTIDE SEQUENCE [LARGE SCALE GENOMIC DNA]</scope>
    <source>
        <strain>H70</strain>
    </source>
</reference>
<comment type="function">
    <text evidence="1">Digests double-stranded RNA. Involved in the processing of primary rRNA transcript to yield the immediate precursors to the large and small rRNAs (23S and 16S). Processes some mRNAs, and tRNAs when they are encoded in the rRNA operon. Processes pre-crRNA and tracrRNA of type II CRISPR loci if present in the organism.</text>
</comment>
<comment type="catalytic activity">
    <reaction evidence="1">
        <text>Endonucleolytic cleavage to 5'-phosphomonoester.</text>
        <dbReference type="EC" id="3.1.26.3"/>
    </reaction>
</comment>
<comment type="cofactor">
    <cofactor evidence="1">
        <name>Mg(2+)</name>
        <dbReference type="ChEBI" id="CHEBI:18420"/>
    </cofactor>
</comment>
<comment type="subunit">
    <text evidence="1">Homodimer.</text>
</comment>
<comment type="subcellular location">
    <subcellularLocation>
        <location evidence="1">Cytoplasm</location>
    </subcellularLocation>
</comment>
<comment type="similarity">
    <text evidence="1">Belongs to the ribonuclease III family.</text>
</comment>
<protein>
    <recommendedName>
        <fullName evidence="1">Ribonuclease 3</fullName>
        <ecNumber evidence="1">3.1.26.3</ecNumber>
    </recommendedName>
    <alternativeName>
        <fullName evidence="1">Ribonuclease III</fullName>
        <shortName evidence="1">RNase III</shortName>
    </alternativeName>
</protein>
<feature type="chain" id="PRO_1000202846" description="Ribonuclease 3">
    <location>
        <begin position="1"/>
        <end position="230"/>
    </location>
</feature>
<feature type="domain" description="RNase III" evidence="1">
    <location>
        <begin position="5"/>
        <end position="134"/>
    </location>
</feature>
<feature type="domain" description="DRBM" evidence="1">
    <location>
        <begin position="160"/>
        <end position="229"/>
    </location>
</feature>
<feature type="active site" evidence="1">
    <location>
        <position position="51"/>
    </location>
</feature>
<feature type="active site" evidence="1">
    <location>
        <position position="123"/>
    </location>
</feature>
<feature type="binding site" evidence="1">
    <location>
        <position position="47"/>
    </location>
    <ligand>
        <name>Mg(2+)</name>
        <dbReference type="ChEBI" id="CHEBI:18420"/>
    </ligand>
</feature>
<feature type="binding site" evidence="1">
    <location>
        <position position="120"/>
    </location>
    <ligand>
        <name>Mg(2+)</name>
        <dbReference type="ChEBI" id="CHEBI:18420"/>
    </ligand>
</feature>
<feature type="binding site" evidence="1">
    <location>
        <position position="123"/>
    </location>
    <ligand>
        <name>Mg(2+)</name>
        <dbReference type="ChEBI" id="CHEBI:18420"/>
    </ligand>
</feature>